<reference key="1">
    <citation type="submission" date="2006-11" db="EMBL/GenBank/DDBJ databases">
        <title>Identification and characterization of a new conjugation/ type IVA secretion system (trb/tra) of L. pneumophila Corby localized on a mobile genomic island.</title>
        <authorList>
            <person name="Gloeckner G."/>
            <person name="Albert-Weissenberger C."/>
            <person name="Weinmann E."/>
            <person name="Jacobi S."/>
            <person name="Schunder E."/>
            <person name="Steinert M."/>
            <person name="Buchrieser C."/>
            <person name="Hacker J."/>
            <person name="Heuner K."/>
        </authorList>
    </citation>
    <scope>NUCLEOTIDE SEQUENCE [LARGE SCALE GENOMIC DNA]</scope>
    <source>
        <strain>Corby</strain>
    </source>
</reference>
<protein>
    <recommendedName>
        <fullName evidence="1">Glutaminase</fullName>
        <ecNumber evidence="1">3.5.1.2</ecNumber>
    </recommendedName>
</protein>
<sequence>MSSKLLTIQLLEELVHAAELNQEGKTADYIPELANVNQELTAIAVQPLGEKTLAYSNNPLHPVTLQSTGKMIPLIGLLEEFGADQLFEWVKVEPSGDDFASITRLEQFGPKPSNPMLNAGAIALCSRIPGVGEQQFRWLEHWVQKLFNQRLSINPLVFASEKRTGNRNRALAYLLKSRNNLGADVHETLDLYFALCSYEAMLDQMLYLPAVLANRGQDPDTGEQILSIETCKITLAIMATCGLYDETGTHMVKTGMPAKSGVSGYTIAVVPGKAGIVVLSPRVNAKGNSIRGEIMLEGLSKAMGWHFALP</sequence>
<comment type="catalytic activity">
    <reaction evidence="1">
        <text>L-glutamine + H2O = L-glutamate + NH4(+)</text>
        <dbReference type="Rhea" id="RHEA:15889"/>
        <dbReference type="ChEBI" id="CHEBI:15377"/>
        <dbReference type="ChEBI" id="CHEBI:28938"/>
        <dbReference type="ChEBI" id="CHEBI:29985"/>
        <dbReference type="ChEBI" id="CHEBI:58359"/>
        <dbReference type="EC" id="3.5.1.2"/>
    </reaction>
</comment>
<comment type="subunit">
    <text evidence="1">Homotetramer.</text>
</comment>
<comment type="similarity">
    <text evidence="1">Belongs to the glutaminase family.</text>
</comment>
<evidence type="ECO:0000255" key="1">
    <source>
        <dbReference type="HAMAP-Rule" id="MF_00313"/>
    </source>
</evidence>
<feature type="chain" id="PRO_1000079074" description="Glutaminase">
    <location>
        <begin position="1"/>
        <end position="310"/>
    </location>
</feature>
<feature type="binding site" evidence="1">
    <location>
        <position position="67"/>
    </location>
    <ligand>
        <name>substrate</name>
    </ligand>
</feature>
<feature type="binding site" evidence="1">
    <location>
        <position position="118"/>
    </location>
    <ligand>
        <name>substrate</name>
    </ligand>
</feature>
<feature type="binding site" evidence="1">
    <location>
        <position position="161"/>
    </location>
    <ligand>
        <name>substrate</name>
    </ligand>
</feature>
<feature type="binding site" evidence="1">
    <location>
        <position position="168"/>
    </location>
    <ligand>
        <name>substrate</name>
    </ligand>
</feature>
<feature type="binding site" evidence="1">
    <location>
        <position position="192"/>
    </location>
    <ligand>
        <name>substrate</name>
    </ligand>
</feature>
<feature type="binding site" evidence="1">
    <location>
        <position position="244"/>
    </location>
    <ligand>
        <name>substrate</name>
    </ligand>
</feature>
<feature type="binding site" evidence="1">
    <location>
        <position position="262"/>
    </location>
    <ligand>
        <name>substrate</name>
    </ligand>
</feature>
<name>GLSA_LEGPC</name>
<organism>
    <name type="scientific">Legionella pneumophila (strain Corby)</name>
    <dbReference type="NCBI Taxonomy" id="400673"/>
    <lineage>
        <taxon>Bacteria</taxon>
        <taxon>Pseudomonadati</taxon>
        <taxon>Pseudomonadota</taxon>
        <taxon>Gammaproteobacteria</taxon>
        <taxon>Legionellales</taxon>
        <taxon>Legionellaceae</taxon>
        <taxon>Legionella</taxon>
    </lineage>
</organism>
<keyword id="KW-0378">Hydrolase</keyword>
<gene>
    <name evidence="1" type="primary">glsA</name>
    <name type="ordered locus">LPC_0319</name>
</gene>
<dbReference type="EC" id="3.5.1.2" evidence="1"/>
<dbReference type="EMBL" id="CP000675">
    <property type="protein sequence ID" value="ABQ54314.1"/>
    <property type="molecule type" value="Genomic_DNA"/>
</dbReference>
<dbReference type="RefSeq" id="WP_011945486.1">
    <property type="nucleotide sequence ID" value="NZ_JAPMSS010000003.1"/>
</dbReference>
<dbReference type="SMR" id="A5IAB4"/>
<dbReference type="KEGG" id="lpc:LPC_0319"/>
<dbReference type="HOGENOM" id="CLU_027932_1_0_6"/>
<dbReference type="GO" id="GO:0004359">
    <property type="term" value="F:glutaminase activity"/>
    <property type="evidence" value="ECO:0007669"/>
    <property type="project" value="UniProtKB-UniRule"/>
</dbReference>
<dbReference type="GO" id="GO:0006537">
    <property type="term" value="P:glutamate biosynthetic process"/>
    <property type="evidence" value="ECO:0007669"/>
    <property type="project" value="TreeGrafter"/>
</dbReference>
<dbReference type="GO" id="GO:0006543">
    <property type="term" value="P:glutamine catabolic process"/>
    <property type="evidence" value="ECO:0007669"/>
    <property type="project" value="TreeGrafter"/>
</dbReference>
<dbReference type="Gene3D" id="3.40.710.10">
    <property type="entry name" value="DD-peptidase/beta-lactamase superfamily"/>
    <property type="match status" value="1"/>
</dbReference>
<dbReference type="HAMAP" id="MF_00313">
    <property type="entry name" value="Glutaminase"/>
    <property type="match status" value="1"/>
</dbReference>
<dbReference type="InterPro" id="IPR012338">
    <property type="entry name" value="Beta-lactam/transpept-like"/>
</dbReference>
<dbReference type="InterPro" id="IPR015868">
    <property type="entry name" value="Glutaminase"/>
</dbReference>
<dbReference type="NCBIfam" id="TIGR03814">
    <property type="entry name" value="Gln_ase"/>
    <property type="match status" value="1"/>
</dbReference>
<dbReference type="PANTHER" id="PTHR12544">
    <property type="entry name" value="GLUTAMINASE"/>
    <property type="match status" value="1"/>
</dbReference>
<dbReference type="PANTHER" id="PTHR12544:SF29">
    <property type="entry name" value="GLUTAMINASE"/>
    <property type="match status" value="1"/>
</dbReference>
<dbReference type="Pfam" id="PF04960">
    <property type="entry name" value="Glutaminase"/>
    <property type="match status" value="1"/>
</dbReference>
<dbReference type="SUPFAM" id="SSF56601">
    <property type="entry name" value="beta-lactamase/transpeptidase-like"/>
    <property type="match status" value="1"/>
</dbReference>
<accession>A5IAB4</accession>
<proteinExistence type="inferred from homology"/>